<keyword id="KW-0067">ATP-binding</keyword>
<keyword id="KW-0170">Cobalt</keyword>
<keyword id="KW-0963">Cytoplasm</keyword>
<keyword id="KW-0460">Magnesium</keyword>
<keyword id="KW-0479">Metal-binding</keyword>
<keyword id="KW-0547">Nucleotide-binding</keyword>
<keyword id="KW-0554">One-carbon metabolism</keyword>
<keyword id="KW-0630">Potassium</keyword>
<keyword id="KW-0808">Transferase</keyword>
<proteinExistence type="evidence at transcript level"/>
<name>METK1_BRAJU</name>
<reference key="1">
    <citation type="journal article" date="1995" name="Plant Physiol.">
        <title>Cloning and nucleotide sequence of a cDNA encoding S-adenosyl-L-methionine synthetase from mustard (Brassica juncea [L.] Czern &amp; Coss).</title>
        <authorList>
            <person name="Wen C.-M."/>
            <person name="Wu M."/>
            <person name="Goh C.-J."/>
            <person name="Pua E.-C."/>
        </authorList>
    </citation>
    <scope>NUCLEOTIDE SEQUENCE [MRNA]</scope>
    <source>
        <strain>cv. India mustard</strain>
        <tissue>Leaf</tissue>
    </source>
</reference>
<organism>
    <name type="scientific">Brassica juncea</name>
    <name type="common">Indian mustard</name>
    <name type="synonym">Sinapis juncea</name>
    <dbReference type="NCBI Taxonomy" id="3707"/>
    <lineage>
        <taxon>Eukaryota</taxon>
        <taxon>Viridiplantae</taxon>
        <taxon>Streptophyta</taxon>
        <taxon>Embryophyta</taxon>
        <taxon>Tracheophyta</taxon>
        <taxon>Spermatophyta</taxon>
        <taxon>Magnoliopsida</taxon>
        <taxon>eudicotyledons</taxon>
        <taxon>Gunneridae</taxon>
        <taxon>Pentapetalae</taxon>
        <taxon>rosids</taxon>
        <taxon>malvids</taxon>
        <taxon>Brassicales</taxon>
        <taxon>Brassicaceae</taxon>
        <taxon>Brassiceae</taxon>
        <taxon>Brassica</taxon>
    </lineage>
</organism>
<protein>
    <recommendedName>
        <fullName>S-adenosylmethionine synthase 1</fullName>
        <shortName>AdoMet synthase 1</shortName>
        <ecNumber evidence="5">2.5.1.6</ecNumber>
    </recommendedName>
    <alternativeName>
        <fullName>Methionine adenosyltransferase 1</fullName>
        <shortName>MAT 1</shortName>
    </alternativeName>
</protein>
<evidence type="ECO:0000250" key="1"/>
<evidence type="ECO:0000250" key="2">
    <source>
        <dbReference type="UniProtKB" id="P0A817"/>
    </source>
</evidence>
<evidence type="ECO:0000250" key="3">
    <source>
        <dbReference type="UniProtKB" id="P13444"/>
    </source>
</evidence>
<evidence type="ECO:0000250" key="4">
    <source>
        <dbReference type="UniProtKB" id="Q00266"/>
    </source>
</evidence>
<evidence type="ECO:0000250" key="5">
    <source>
        <dbReference type="UniProtKB" id="Q96551"/>
    </source>
</evidence>
<evidence type="ECO:0000305" key="6"/>
<dbReference type="EC" id="2.5.1.6" evidence="5"/>
<dbReference type="EMBL" id="X80362">
    <property type="protein sequence ID" value="CAA56590.1"/>
    <property type="molecule type" value="mRNA"/>
</dbReference>
<dbReference type="SMR" id="P49611"/>
<dbReference type="UniPathway" id="UPA00315">
    <property type="reaction ID" value="UER00080"/>
</dbReference>
<dbReference type="GO" id="GO:0005737">
    <property type="term" value="C:cytoplasm"/>
    <property type="evidence" value="ECO:0007669"/>
    <property type="project" value="UniProtKB-SubCell"/>
</dbReference>
<dbReference type="GO" id="GO:0005524">
    <property type="term" value="F:ATP binding"/>
    <property type="evidence" value="ECO:0007669"/>
    <property type="project" value="UniProtKB-KW"/>
</dbReference>
<dbReference type="GO" id="GO:0046872">
    <property type="term" value="F:metal ion binding"/>
    <property type="evidence" value="ECO:0007669"/>
    <property type="project" value="UniProtKB-KW"/>
</dbReference>
<dbReference type="GO" id="GO:0004478">
    <property type="term" value="F:methionine adenosyltransferase activity"/>
    <property type="evidence" value="ECO:0007669"/>
    <property type="project" value="UniProtKB-EC"/>
</dbReference>
<dbReference type="GO" id="GO:0006730">
    <property type="term" value="P:one-carbon metabolic process"/>
    <property type="evidence" value="ECO:0007669"/>
    <property type="project" value="UniProtKB-KW"/>
</dbReference>
<dbReference type="GO" id="GO:0006556">
    <property type="term" value="P:S-adenosylmethionine biosynthetic process"/>
    <property type="evidence" value="ECO:0007669"/>
    <property type="project" value="UniProtKB-UniPathway"/>
</dbReference>
<dbReference type="CDD" id="cd18079">
    <property type="entry name" value="S-AdoMet_synt"/>
    <property type="match status" value="1"/>
</dbReference>
<dbReference type="FunFam" id="3.30.300.10:FF:000003">
    <property type="entry name" value="S-adenosylmethionine synthase"/>
    <property type="match status" value="1"/>
</dbReference>
<dbReference type="FunFam" id="3.30.300.10:FF:000004">
    <property type="entry name" value="S-adenosylmethionine synthase"/>
    <property type="match status" value="1"/>
</dbReference>
<dbReference type="FunFam" id="3.30.300.10:FF:000011">
    <property type="entry name" value="S-adenosylmethionine synthase"/>
    <property type="match status" value="1"/>
</dbReference>
<dbReference type="FunFam" id="3.30.300.10:FF:000021">
    <property type="entry name" value="S-adenosylmethionine synthetase 1"/>
    <property type="match status" value="1"/>
</dbReference>
<dbReference type="Gene3D" id="3.30.300.10">
    <property type="match status" value="3"/>
</dbReference>
<dbReference type="HAMAP" id="MF_00086">
    <property type="entry name" value="S_AdoMet_synth1"/>
    <property type="match status" value="1"/>
</dbReference>
<dbReference type="InterPro" id="IPR022631">
    <property type="entry name" value="ADOMET_SYNTHASE_CS"/>
</dbReference>
<dbReference type="InterPro" id="IPR022630">
    <property type="entry name" value="S-AdoMet_synt_C"/>
</dbReference>
<dbReference type="InterPro" id="IPR022629">
    <property type="entry name" value="S-AdoMet_synt_central"/>
</dbReference>
<dbReference type="InterPro" id="IPR022628">
    <property type="entry name" value="S-AdoMet_synt_N"/>
</dbReference>
<dbReference type="InterPro" id="IPR002133">
    <property type="entry name" value="S-AdoMet_synthetase"/>
</dbReference>
<dbReference type="InterPro" id="IPR022636">
    <property type="entry name" value="S-AdoMet_synthetase_sfam"/>
</dbReference>
<dbReference type="NCBIfam" id="TIGR01034">
    <property type="entry name" value="metK"/>
    <property type="match status" value="1"/>
</dbReference>
<dbReference type="PANTHER" id="PTHR11964">
    <property type="entry name" value="S-ADENOSYLMETHIONINE SYNTHETASE"/>
    <property type="match status" value="1"/>
</dbReference>
<dbReference type="Pfam" id="PF02773">
    <property type="entry name" value="S-AdoMet_synt_C"/>
    <property type="match status" value="1"/>
</dbReference>
<dbReference type="Pfam" id="PF02772">
    <property type="entry name" value="S-AdoMet_synt_M"/>
    <property type="match status" value="1"/>
</dbReference>
<dbReference type="Pfam" id="PF00438">
    <property type="entry name" value="S-AdoMet_synt_N"/>
    <property type="match status" value="1"/>
</dbReference>
<dbReference type="PIRSF" id="PIRSF000497">
    <property type="entry name" value="MAT"/>
    <property type="match status" value="1"/>
</dbReference>
<dbReference type="SUPFAM" id="SSF55973">
    <property type="entry name" value="S-adenosylmethionine synthetase"/>
    <property type="match status" value="3"/>
</dbReference>
<dbReference type="PROSITE" id="PS00376">
    <property type="entry name" value="ADOMET_SYNTHASE_1"/>
    <property type="match status" value="1"/>
</dbReference>
<dbReference type="PROSITE" id="PS00377">
    <property type="entry name" value="ADOMET_SYNTHASE_2"/>
    <property type="match status" value="1"/>
</dbReference>
<feature type="chain" id="PRO_0000174458" description="S-adenosylmethionine synthase 1">
    <location>
        <begin position="1"/>
        <end position="393"/>
    </location>
</feature>
<feature type="binding site" evidence="3">
    <location>
        <position position="9"/>
    </location>
    <ligand>
        <name>Mg(2+)</name>
        <dbReference type="ChEBI" id="CHEBI:18420"/>
    </ligand>
</feature>
<feature type="binding site" description="in other chain" evidence="4">
    <location>
        <position position="15"/>
    </location>
    <ligand>
        <name>ATP</name>
        <dbReference type="ChEBI" id="CHEBI:30616"/>
        <note>ligand shared between two neighboring subunits</note>
    </ligand>
</feature>
<feature type="binding site" evidence="2">
    <location>
        <position position="43"/>
    </location>
    <ligand>
        <name>K(+)</name>
        <dbReference type="ChEBI" id="CHEBI:29103"/>
    </ligand>
</feature>
<feature type="binding site" description="in other chain" evidence="2">
    <location>
        <position position="56"/>
    </location>
    <ligand>
        <name>L-methionine</name>
        <dbReference type="ChEBI" id="CHEBI:57844"/>
        <note>ligand shared between two neighboring subunits</note>
    </ligand>
</feature>
<feature type="binding site" description="in other chain" evidence="2">
    <location>
        <position position="99"/>
    </location>
    <ligand>
        <name>L-methionine</name>
        <dbReference type="ChEBI" id="CHEBI:57844"/>
        <note>ligand shared between two neighboring subunits</note>
    </ligand>
</feature>
<feature type="binding site" description="in other chain" evidence="4">
    <location>
        <begin position="167"/>
        <end position="169"/>
    </location>
    <ligand>
        <name>ATP</name>
        <dbReference type="ChEBI" id="CHEBI:30616"/>
        <note>ligand shared between two neighboring subunits</note>
    </ligand>
</feature>
<feature type="binding site" description="in other chain" evidence="4">
    <location>
        <begin position="235"/>
        <end position="238"/>
    </location>
    <ligand>
        <name>ATP</name>
        <dbReference type="ChEBI" id="CHEBI:30616"/>
        <note>ligand shared between two neighboring subunits</note>
    </ligand>
</feature>
<feature type="binding site" description="in other chain" evidence="4">
    <location>
        <position position="246"/>
    </location>
    <ligand>
        <name>ATP</name>
        <dbReference type="ChEBI" id="CHEBI:30616"/>
        <note>ligand shared between two neighboring subunits</note>
    </ligand>
</feature>
<feature type="binding site" evidence="2">
    <location>
        <position position="246"/>
    </location>
    <ligand>
        <name>L-methionine</name>
        <dbReference type="ChEBI" id="CHEBI:57844"/>
        <note>ligand shared between two neighboring subunits</note>
    </ligand>
</feature>
<feature type="binding site" description="in other chain" evidence="2">
    <location>
        <begin position="252"/>
        <end position="253"/>
    </location>
    <ligand>
        <name>ATP</name>
        <dbReference type="ChEBI" id="CHEBI:30616"/>
        <note>ligand shared between two neighboring subunits</note>
    </ligand>
</feature>
<feature type="binding site" evidence="2">
    <location>
        <position position="269"/>
    </location>
    <ligand>
        <name>ATP</name>
        <dbReference type="ChEBI" id="CHEBI:30616"/>
        <note>ligand shared between two neighboring subunits</note>
    </ligand>
</feature>
<feature type="binding site" evidence="2">
    <location>
        <position position="273"/>
    </location>
    <ligand>
        <name>ATP</name>
        <dbReference type="ChEBI" id="CHEBI:30616"/>
        <note>ligand shared between two neighboring subunits</note>
    </ligand>
</feature>
<feature type="binding site" evidence="3">
    <location>
        <position position="277"/>
    </location>
    <ligand>
        <name>ATP</name>
        <dbReference type="ChEBI" id="CHEBI:30616"/>
        <note>ligand shared between two neighboring subunits</note>
    </ligand>
</feature>
<feature type="binding site" description="in other chain" evidence="2">
    <location>
        <position position="277"/>
    </location>
    <ligand>
        <name>L-methionine</name>
        <dbReference type="ChEBI" id="CHEBI:57844"/>
        <note>ligand shared between two neighboring subunits</note>
    </ligand>
</feature>
<sequence>METFLFTSESVNEGHPDKLCDQISDAVLDACLEQDPDSKVACETCTKTNMVMVFGEITTKATVDYEKIVRDTCRSIGFISDDVGLDADKCKVLVNIEQQSPDIAQGVHGHFTKRPEDIGAGDQGHMFGYATDETPELMPLSHVLATKIGAKLTEVRKNGTCRWLRPDGKTQVTVEYYNDNGAMVPVRVHTVLISTQHDETVTNEEIARDLKEHVIKPIIPEKYLDDKTIFHLNPSGRFVIGGPDGDAGLTGRKIIIDTYGGWGAHGGGAFSGKDPTKVDRSGAYIVRQSAKSVVANGMARRALVQVSYAIGVPEPFSVFVDTYGTGLIPDKEILKIVKESFDFRPGMMTINLDLKRGGNGRFLKTAAYGHFGRDDPDFTWEVVKPLKWDKPQA</sequence>
<comment type="function">
    <text evidence="5">Catalyzes the formation of S-adenosylmethionine from methionine and ATP. The reaction comprises two steps that are both catalyzed by the same enzyme: formation of S-adenosylmethionine (AdoMet) and triphosphate, and subsequent hydrolysis of the triphosphate.</text>
</comment>
<comment type="catalytic activity">
    <reaction evidence="5">
        <text>L-methionine + ATP + H2O = S-adenosyl-L-methionine + phosphate + diphosphate</text>
        <dbReference type="Rhea" id="RHEA:21080"/>
        <dbReference type="ChEBI" id="CHEBI:15377"/>
        <dbReference type="ChEBI" id="CHEBI:30616"/>
        <dbReference type="ChEBI" id="CHEBI:33019"/>
        <dbReference type="ChEBI" id="CHEBI:43474"/>
        <dbReference type="ChEBI" id="CHEBI:57844"/>
        <dbReference type="ChEBI" id="CHEBI:59789"/>
        <dbReference type="EC" id="2.5.1.6"/>
    </reaction>
</comment>
<comment type="cofactor">
    <cofactor evidence="5">
        <name>Mn(2+)</name>
        <dbReference type="ChEBI" id="CHEBI:29035"/>
    </cofactor>
    <cofactor evidence="5">
        <name>Mg(2+)</name>
        <dbReference type="ChEBI" id="CHEBI:18420"/>
    </cofactor>
    <cofactor evidence="5">
        <name>Co(2+)</name>
        <dbReference type="ChEBI" id="CHEBI:48828"/>
    </cofactor>
    <text evidence="3 5">Binds 2 divalent ions per subunit. The metal ions interact primarily with the substrate (By similarity). Can utilize magnesium, manganese or cobalt (in vitro) (By similarity).</text>
</comment>
<comment type="cofactor">
    <cofactor evidence="5">
        <name>K(+)</name>
        <dbReference type="ChEBI" id="CHEBI:29103"/>
    </cofactor>
    <text evidence="3">Binds 1 potassium ion per subunit. The potassium ion interacts primarily with the substrate (By similarity).</text>
</comment>
<comment type="pathway">
    <text evidence="5">Amino-acid biosynthesis; S-adenosyl-L-methionine biosynthesis; S-adenosyl-L-methionine from L-methionine: step 1/1.</text>
</comment>
<comment type="subunit">
    <text evidence="1">Homotetramer.</text>
</comment>
<comment type="subcellular location">
    <subcellularLocation>
        <location evidence="1">Cytoplasm</location>
    </subcellularLocation>
</comment>
<comment type="similarity">
    <text evidence="6">Belongs to the AdoMet synthase family.</text>
</comment>
<accession>P49611</accession>
<gene>
    <name type="primary">SAMS1</name>
</gene>